<proteinExistence type="inferred from homology"/>
<comment type="function">
    <text evidence="1">Core subunit of the mitochondrial membrane respiratory chain NADH dehydrogenase (Complex I) that is believed to belong to the minimal assembly required for catalysis. Complex I functions in the transfer of electrons from NADH to the respiratory chain. The immediate electron acceptor for the enzyme is believed to be ubiquinone (By similarity).</text>
</comment>
<comment type="catalytic activity">
    <reaction>
        <text>a ubiquinone + NADH + 5 H(+)(in) = a ubiquinol + NAD(+) + 4 H(+)(out)</text>
        <dbReference type="Rhea" id="RHEA:29091"/>
        <dbReference type="Rhea" id="RHEA-COMP:9565"/>
        <dbReference type="Rhea" id="RHEA-COMP:9566"/>
        <dbReference type="ChEBI" id="CHEBI:15378"/>
        <dbReference type="ChEBI" id="CHEBI:16389"/>
        <dbReference type="ChEBI" id="CHEBI:17976"/>
        <dbReference type="ChEBI" id="CHEBI:57540"/>
        <dbReference type="ChEBI" id="CHEBI:57945"/>
        <dbReference type="EC" id="7.1.1.2"/>
    </reaction>
</comment>
<comment type="subcellular location">
    <subcellularLocation>
        <location evidence="1">Mitochondrion membrane</location>
        <topology evidence="1">Multi-pass membrane protein</topology>
    </subcellularLocation>
</comment>
<comment type="similarity">
    <text evidence="3">Belongs to the complex I subunit 4 family.</text>
</comment>
<sequence>MTYLILLGASICLFPFWEVTMLTLAFIIPMSLTYLNINFTFSFSSELIWLTPIGTALIFLTLMVTLLVLIGTYNIKNYKYIGCLSSLNLVLMMAFCVCDFLTFYVMFEVSLIPTLLLILLWGYQPERMQAGFYLMLYTVTASLPLLLLLLYLYYTVGSLNFYIIMVYYSFNNNPLMLVGLMMAFLVKLPIYTCHLWLPKAHVEAPLGGSMVLAGVLLKLGGYGLYMLINFIISKSSSLVISVIITLSLWGAVIASIICIQQVDIKALVAYSSVAHMSLVSAGILMMSNWSYTCAKMTMIAHGYTSSALFVLANLSYLKIKSRSLMFMKGLLAIFPAMAFYWFLFSCMNMAAPPTLNFIGELLIIPSMYIASYMLLILMCIIMFISAGYSLYMYMTVNHGELGLYITPSIQLKNVDYHVLTAHLLPTFILLIPQLFSV</sequence>
<name>NU4M_ALBCA</name>
<evidence type="ECO:0000250" key="1"/>
<evidence type="ECO:0000255" key="2"/>
<evidence type="ECO:0000305" key="3"/>
<gene>
    <name type="primary">ND4</name>
</gene>
<organism>
    <name type="scientific">Albinaria caerulea</name>
    <name type="common">Land snail</name>
    <dbReference type="NCBI Taxonomy" id="42349"/>
    <lineage>
        <taxon>Eukaryota</taxon>
        <taxon>Metazoa</taxon>
        <taxon>Spiralia</taxon>
        <taxon>Lophotrochozoa</taxon>
        <taxon>Mollusca</taxon>
        <taxon>Gastropoda</taxon>
        <taxon>Heterobranchia</taxon>
        <taxon>Euthyneura</taxon>
        <taxon>Panpulmonata</taxon>
        <taxon>Eupulmonata</taxon>
        <taxon>Stylommatophora</taxon>
        <taxon>Helicina</taxon>
        <taxon>Clausilioidea</taxon>
        <taxon>Clausiliidae</taxon>
        <taxon>Alopiinae</taxon>
        <taxon>Albinaria</taxon>
    </lineage>
</organism>
<reference key="1">
    <citation type="journal article" date="1995" name="Genetics">
        <title>Complete sequence and gene organization of the mitochondrial genome of the land snail Albinaria coerulea.</title>
        <authorList>
            <person name="Hatzoglou E."/>
            <person name="Rodakis G.C."/>
            <person name="Lecanidou R."/>
        </authorList>
    </citation>
    <scope>NUCLEOTIDE SEQUENCE [GENOMIC DNA]</scope>
</reference>
<keyword id="KW-0249">Electron transport</keyword>
<keyword id="KW-0472">Membrane</keyword>
<keyword id="KW-0496">Mitochondrion</keyword>
<keyword id="KW-0520">NAD</keyword>
<keyword id="KW-0679">Respiratory chain</keyword>
<keyword id="KW-1278">Translocase</keyword>
<keyword id="KW-0812">Transmembrane</keyword>
<keyword id="KW-1133">Transmembrane helix</keyword>
<keyword id="KW-0813">Transport</keyword>
<keyword id="KW-0830">Ubiquinone</keyword>
<accession>P48914</accession>
<dbReference type="EC" id="7.1.1.2"/>
<dbReference type="EMBL" id="X83390">
    <property type="protein sequence ID" value="CAA58304.1"/>
    <property type="molecule type" value="Genomic_DNA"/>
</dbReference>
<dbReference type="PIR" id="S59151">
    <property type="entry name" value="S59151"/>
</dbReference>
<dbReference type="RefSeq" id="NP_007337.1">
    <property type="nucleotide sequence ID" value="NC_001761.1"/>
</dbReference>
<dbReference type="SMR" id="P48914"/>
<dbReference type="GeneID" id="807998"/>
<dbReference type="CTD" id="4538"/>
<dbReference type="GO" id="GO:0031966">
    <property type="term" value="C:mitochondrial membrane"/>
    <property type="evidence" value="ECO:0007669"/>
    <property type="project" value="UniProtKB-SubCell"/>
</dbReference>
<dbReference type="GO" id="GO:0008137">
    <property type="term" value="F:NADH dehydrogenase (ubiquinone) activity"/>
    <property type="evidence" value="ECO:0007669"/>
    <property type="project" value="UniProtKB-EC"/>
</dbReference>
<dbReference type="GO" id="GO:0048039">
    <property type="term" value="F:ubiquinone binding"/>
    <property type="evidence" value="ECO:0007669"/>
    <property type="project" value="TreeGrafter"/>
</dbReference>
<dbReference type="GO" id="GO:0042773">
    <property type="term" value="P:ATP synthesis coupled electron transport"/>
    <property type="evidence" value="ECO:0007669"/>
    <property type="project" value="InterPro"/>
</dbReference>
<dbReference type="GO" id="GO:0015990">
    <property type="term" value="P:electron transport coupled proton transport"/>
    <property type="evidence" value="ECO:0007669"/>
    <property type="project" value="TreeGrafter"/>
</dbReference>
<dbReference type="InterPro" id="IPR003918">
    <property type="entry name" value="NADH_UbQ_OxRdtase"/>
</dbReference>
<dbReference type="InterPro" id="IPR001750">
    <property type="entry name" value="ND/Mrp_TM"/>
</dbReference>
<dbReference type="PANTHER" id="PTHR43507">
    <property type="entry name" value="NADH-UBIQUINONE OXIDOREDUCTASE CHAIN 4"/>
    <property type="match status" value="1"/>
</dbReference>
<dbReference type="PANTHER" id="PTHR43507:SF20">
    <property type="entry name" value="NADH-UBIQUINONE OXIDOREDUCTASE CHAIN 4"/>
    <property type="match status" value="1"/>
</dbReference>
<dbReference type="Pfam" id="PF00361">
    <property type="entry name" value="Proton_antipo_M"/>
    <property type="match status" value="1"/>
</dbReference>
<dbReference type="PRINTS" id="PR01437">
    <property type="entry name" value="NUOXDRDTASE4"/>
</dbReference>
<protein>
    <recommendedName>
        <fullName>NADH-ubiquinone oxidoreductase chain 4</fullName>
        <ecNumber>7.1.1.2</ecNumber>
    </recommendedName>
    <alternativeName>
        <fullName>NADH dehydrogenase subunit 4</fullName>
    </alternativeName>
</protein>
<geneLocation type="mitochondrion"/>
<feature type="chain" id="PRO_0000117884" description="NADH-ubiquinone oxidoreductase chain 4">
    <location>
        <begin position="1"/>
        <end position="437"/>
    </location>
</feature>
<feature type="transmembrane region" description="Helical" evidence="2">
    <location>
        <begin position="8"/>
        <end position="28"/>
    </location>
</feature>
<feature type="transmembrane region" description="Helical" evidence="2">
    <location>
        <begin position="50"/>
        <end position="70"/>
    </location>
</feature>
<feature type="transmembrane region" description="Helical" evidence="2">
    <location>
        <begin position="78"/>
        <end position="98"/>
    </location>
</feature>
<feature type="transmembrane region" description="Helical" evidence="2">
    <location>
        <begin position="100"/>
        <end position="120"/>
    </location>
</feature>
<feature type="transmembrane region" description="Helical" evidence="2">
    <location>
        <begin position="132"/>
        <end position="152"/>
    </location>
</feature>
<feature type="transmembrane region" description="Helical" evidence="2">
    <location>
        <begin position="177"/>
        <end position="197"/>
    </location>
</feature>
<feature type="transmembrane region" description="Helical" evidence="2">
    <location>
        <begin position="212"/>
        <end position="232"/>
    </location>
</feature>
<feature type="transmembrane region" description="Helical" evidence="2">
    <location>
        <begin position="239"/>
        <end position="259"/>
    </location>
</feature>
<feature type="transmembrane region" description="Helical" evidence="2">
    <location>
        <begin position="266"/>
        <end position="286"/>
    </location>
</feature>
<feature type="transmembrane region" description="Helical" evidence="2">
    <location>
        <begin position="297"/>
        <end position="317"/>
    </location>
</feature>
<feature type="transmembrane region" description="Helical" evidence="2">
    <location>
        <begin position="324"/>
        <end position="344"/>
    </location>
</feature>
<feature type="transmembrane region" description="Helical" evidence="2">
    <location>
        <begin position="361"/>
        <end position="381"/>
    </location>
</feature>
<feature type="transmembrane region" description="Helical" evidence="2">
    <location>
        <begin position="417"/>
        <end position="437"/>
    </location>
</feature>